<proteinExistence type="inferred from homology"/>
<name>PYRF_BACC3</name>
<sequence length="238" mass="26198">MSQSLIVALDFPGKQDVEQFLRHFEGEELFVKVGMELFYKEGPAIITYLKEKGHKIFLDLKLHDIPNTVKSAMRSLASLDVDMVNVHAAGGSSMMKAAIEGLEEGKQEGKERPICIAVTQLTSTSEAMMKKEIGIEKTLEEAVAHYAKLTKESGLDGVVCSTLEVPKLREVCGNEFVTVTPGIRLASDDVNDQVRVATPKRARELGSSYIVVGRSITKAENPLEAYKTVKQQWEGVTV</sequence>
<accession>C1EPP7</accession>
<organism>
    <name type="scientific">Bacillus cereus (strain 03BB102)</name>
    <dbReference type="NCBI Taxonomy" id="572264"/>
    <lineage>
        <taxon>Bacteria</taxon>
        <taxon>Bacillati</taxon>
        <taxon>Bacillota</taxon>
        <taxon>Bacilli</taxon>
        <taxon>Bacillales</taxon>
        <taxon>Bacillaceae</taxon>
        <taxon>Bacillus</taxon>
        <taxon>Bacillus cereus group</taxon>
    </lineage>
</organism>
<feature type="chain" id="PRO_1000164559" description="Orotidine 5'-phosphate decarboxylase">
    <location>
        <begin position="1"/>
        <end position="238"/>
    </location>
</feature>
<feature type="active site" description="Proton donor" evidence="1">
    <location>
        <position position="61"/>
    </location>
</feature>
<feature type="binding site" evidence="1">
    <location>
        <position position="10"/>
    </location>
    <ligand>
        <name>substrate</name>
    </ligand>
</feature>
<feature type="binding site" evidence="1">
    <location>
        <position position="32"/>
    </location>
    <ligand>
        <name>substrate</name>
    </ligand>
</feature>
<feature type="binding site" evidence="1">
    <location>
        <begin position="59"/>
        <end position="68"/>
    </location>
    <ligand>
        <name>substrate</name>
    </ligand>
</feature>
<feature type="binding site" evidence="1">
    <location>
        <position position="122"/>
    </location>
    <ligand>
        <name>substrate</name>
    </ligand>
</feature>
<feature type="binding site" evidence="1">
    <location>
        <position position="184"/>
    </location>
    <ligand>
        <name>substrate</name>
    </ligand>
</feature>
<feature type="binding site" evidence="1">
    <location>
        <position position="193"/>
    </location>
    <ligand>
        <name>substrate</name>
    </ligand>
</feature>
<feature type="binding site" evidence="1">
    <location>
        <position position="213"/>
    </location>
    <ligand>
        <name>substrate</name>
    </ligand>
</feature>
<feature type="binding site" evidence="1">
    <location>
        <position position="214"/>
    </location>
    <ligand>
        <name>substrate</name>
    </ligand>
</feature>
<evidence type="ECO:0000255" key="1">
    <source>
        <dbReference type="HAMAP-Rule" id="MF_01200"/>
    </source>
</evidence>
<reference key="1">
    <citation type="submission" date="2009-02" db="EMBL/GenBank/DDBJ databases">
        <title>Genome sequence of Bacillus cereus 03BB102.</title>
        <authorList>
            <person name="Dodson R.J."/>
            <person name="Jackson P."/>
            <person name="Munk A.C."/>
            <person name="Brettin T."/>
            <person name="Bruce D."/>
            <person name="Detter C."/>
            <person name="Tapia R."/>
            <person name="Han C."/>
            <person name="Sutton G."/>
            <person name="Sims D."/>
        </authorList>
    </citation>
    <scope>NUCLEOTIDE SEQUENCE [LARGE SCALE GENOMIC DNA]</scope>
    <source>
        <strain>03BB102</strain>
    </source>
</reference>
<dbReference type="EC" id="4.1.1.23" evidence="1"/>
<dbReference type="EMBL" id="CP001407">
    <property type="protein sequence ID" value="ACO28776.1"/>
    <property type="molecule type" value="Genomic_DNA"/>
</dbReference>
<dbReference type="RefSeq" id="WP_000083496.1">
    <property type="nucleotide sequence ID" value="NZ_CP009318.1"/>
</dbReference>
<dbReference type="SMR" id="C1EPP7"/>
<dbReference type="GeneID" id="92799844"/>
<dbReference type="KEGG" id="bcx:BCA_3984"/>
<dbReference type="PATRIC" id="fig|572264.18.peg.3940"/>
<dbReference type="UniPathway" id="UPA00070">
    <property type="reaction ID" value="UER00120"/>
</dbReference>
<dbReference type="Proteomes" id="UP000002210">
    <property type="component" value="Chromosome"/>
</dbReference>
<dbReference type="GO" id="GO:0005829">
    <property type="term" value="C:cytosol"/>
    <property type="evidence" value="ECO:0007669"/>
    <property type="project" value="TreeGrafter"/>
</dbReference>
<dbReference type="GO" id="GO:0004590">
    <property type="term" value="F:orotidine-5'-phosphate decarboxylase activity"/>
    <property type="evidence" value="ECO:0007669"/>
    <property type="project" value="UniProtKB-UniRule"/>
</dbReference>
<dbReference type="GO" id="GO:0006207">
    <property type="term" value="P:'de novo' pyrimidine nucleobase biosynthetic process"/>
    <property type="evidence" value="ECO:0007669"/>
    <property type="project" value="InterPro"/>
</dbReference>
<dbReference type="GO" id="GO:0044205">
    <property type="term" value="P:'de novo' UMP biosynthetic process"/>
    <property type="evidence" value="ECO:0007669"/>
    <property type="project" value="UniProtKB-UniRule"/>
</dbReference>
<dbReference type="CDD" id="cd04725">
    <property type="entry name" value="OMP_decarboxylase_like"/>
    <property type="match status" value="1"/>
</dbReference>
<dbReference type="FunFam" id="3.20.20.70:FF:000015">
    <property type="entry name" value="Orotidine 5'-phosphate decarboxylase"/>
    <property type="match status" value="1"/>
</dbReference>
<dbReference type="Gene3D" id="3.20.20.70">
    <property type="entry name" value="Aldolase class I"/>
    <property type="match status" value="1"/>
</dbReference>
<dbReference type="HAMAP" id="MF_01200_B">
    <property type="entry name" value="OMPdecase_type1_B"/>
    <property type="match status" value="1"/>
</dbReference>
<dbReference type="InterPro" id="IPR013785">
    <property type="entry name" value="Aldolase_TIM"/>
</dbReference>
<dbReference type="InterPro" id="IPR014732">
    <property type="entry name" value="OMPdecase"/>
</dbReference>
<dbReference type="InterPro" id="IPR018089">
    <property type="entry name" value="OMPdecase_AS"/>
</dbReference>
<dbReference type="InterPro" id="IPR047596">
    <property type="entry name" value="OMPdecase_bac"/>
</dbReference>
<dbReference type="InterPro" id="IPR001754">
    <property type="entry name" value="OMPdeCOase_dom"/>
</dbReference>
<dbReference type="InterPro" id="IPR011060">
    <property type="entry name" value="RibuloseP-bd_barrel"/>
</dbReference>
<dbReference type="NCBIfam" id="NF001273">
    <property type="entry name" value="PRK00230.1"/>
    <property type="match status" value="1"/>
</dbReference>
<dbReference type="NCBIfam" id="TIGR01740">
    <property type="entry name" value="pyrF"/>
    <property type="match status" value="1"/>
</dbReference>
<dbReference type="PANTHER" id="PTHR32119">
    <property type="entry name" value="OROTIDINE 5'-PHOSPHATE DECARBOXYLASE"/>
    <property type="match status" value="1"/>
</dbReference>
<dbReference type="PANTHER" id="PTHR32119:SF2">
    <property type="entry name" value="OROTIDINE 5'-PHOSPHATE DECARBOXYLASE"/>
    <property type="match status" value="1"/>
</dbReference>
<dbReference type="Pfam" id="PF00215">
    <property type="entry name" value="OMPdecase"/>
    <property type="match status" value="1"/>
</dbReference>
<dbReference type="SMART" id="SM00934">
    <property type="entry name" value="OMPdecase"/>
    <property type="match status" value="1"/>
</dbReference>
<dbReference type="SUPFAM" id="SSF51366">
    <property type="entry name" value="Ribulose-phoshate binding barrel"/>
    <property type="match status" value="1"/>
</dbReference>
<dbReference type="PROSITE" id="PS00156">
    <property type="entry name" value="OMPDECASE"/>
    <property type="match status" value="1"/>
</dbReference>
<gene>
    <name evidence="1" type="primary">pyrF</name>
    <name type="ordered locus">BCA_3984</name>
</gene>
<keyword id="KW-0210">Decarboxylase</keyword>
<keyword id="KW-0456">Lyase</keyword>
<keyword id="KW-0665">Pyrimidine biosynthesis</keyword>
<comment type="function">
    <text evidence="1">Catalyzes the decarboxylation of orotidine 5'-monophosphate (OMP) to uridine 5'-monophosphate (UMP).</text>
</comment>
<comment type="catalytic activity">
    <reaction evidence="1">
        <text>orotidine 5'-phosphate + H(+) = UMP + CO2</text>
        <dbReference type="Rhea" id="RHEA:11596"/>
        <dbReference type="ChEBI" id="CHEBI:15378"/>
        <dbReference type="ChEBI" id="CHEBI:16526"/>
        <dbReference type="ChEBI" id="CHEBI:57538"/>
        <dbReference type="ChEBI" id="CHEBI:57865"/>
        <dbReference type="EC" id="4.1.1.23"/>
    </reaction>
</comment>
<comment type="pathway">
    <text evidence="1">Pyrimidine metabolism; UMP biosynthesis via de novo pathway; UMP from orotate: step 2/2.</text>
</comment>
<comment type="subunit">
    <text evidence="1">Homodimer.</text>
</comment>
<comment type="similarity">
    <text evidence="1">Belongs to the OMP decarboxylase family. Type 1 subfamily.</text>
</comment>
<protein>
    <recommendedName>
        <fullName evidence="1">Orotidine 5'-phosphate decarboxylase</fullName>
        <ecNumber evidence="1">4.1.1.23</ecNumber>
    </recommendedName>
    <alternativeName>
        <fullName evidence="1">OMP decarboxylase</fullName>
        <shortName evidence="1">OMPDCase</shortName>
        <shortName evidence="1">OMPdecase</shortName>
    </alternativeName>
</protein>